<organism>
    <name type="scientific">Escherichia coli (strain SMS-3-5 / SECEC)</name>
    <dbReference type="NCBI Taxonomy" id="439855"/>
    <lineage>
        <taxon>Bacteria</taxon>
        <taxon>Pseudomonadati</taxon>
        <taxon>Pseudomonadota</taxon>
        <taxon>Gammaproteobacteria</taxon>
        <taxon>Enterobacterales</taxon>
        <taxon>Enterobacteriaceae</taxon>
        <taxon>Escherichia</taxon>
    </lineage>
</organism>
<comment type="subcellular location">
    <subcellularLocation>
        <location evidence="1">Cytoplasm</location>
    </subcellularLocation>
</comment>
<comment type="similarity">
    <text evidence="1">Belongs to the UPF0294 family.</text>
</comment>
<proteinExistence type="inferred from homology"/>
<name>YAFD_ECOSM</name>
<gene>
    <name evidence="1" type="primary">yafD</name>
    <name type="ordered locus">EcSMS35_0223</name>
</gene>
<dbReference type="EMBL" id="CP000970">
    <property type="protein sequence ID" value="ACB15826.1"/>
    <property type="molecule type" value="Genomic_DNA"/>
</dbReference>
<dbReference type="RefSeq" id="WP_001230983.1">
    <property type="nucleotide sequence ID" value="NC_010498.1"/>
</dbReference>
<dbReference type="SMR" id="B1LHL8"/>
<dbReference type="KEGG" id="ecm:EcSMS35_0223"/>
<dbReference type="HOGENOM" id="CLU_083563_0_0_6"/>
<dbReference type="Proteomes" id="UP000007011">
    <property type="component" value="Chromosome"/>
</dbReference>
<dbReference type="GO" id="GO:0005737">
    <property type="term" value="C:cytoplasm"/>
    <property type="evidence" value="ECO:0007669"/>
    <property type="project" value="UniProtKB-SubCell"/>
</dbReference>
<dbReference type="GO" id="GO:0003824">
    <property type="term" value="F:catalytic activity"/>
    <property type="evidence" value="ECO:0007669"/>
    <property type="project" value="InterPro"/>
</dbReference>
<dbReference type="Gene3D" id="3.60.10.10">
    <property type="entry name" value="Endonuclease/exonuclease/phosphatase"/>
    <property type="match status" value="1"/>
</dbReference>
<dbReference type="HAMAP" id="MF_01119">
    <property type="entry name" value="UPF0294"/>
    <property type="match status" value="1"/>
</dbReference>
<dbReference type="InterPro" id="IPR036691">
    <property type="entry name" value="Endo/exonu/phosph_ase_sf"/>
</dbReference>
<dbReference type="InterPro" id="IPR005135">
    <property type="entry name" value="Endo/exonuclease/phosphatase"/>
</dbReference>
<dbReference type="InterPro" id="IPR022958">
    <property type="entry name" value="UPF0294"/>
</dbReference>
<dbReference type="NCBIfam" id="NF003839">
    <property type="entry name" value="PRK05421.1-1"/>
    <property type="match status" value="1"/>
</dbReference>
<dbReference type="NCBIfam" id="NF003840">
    <property type="entry name" value="PRK05421.1-2"/>
    <property type="match status" value="1"/>
</dbReference>
<dbReference type="NCBIfam" id="NF003841">
    <property type="entry name" value="PRK05421.1-3"/>
    <property type="match status" value="1"/>
</dbReference>
<dbReference type="NCBIfam" id="NF003842">
    <property type="entry name" value="PRK05421.1-4"/>
    <property type="match status" value="1"/>
</dbReference>
<dbReference type="Pfam" id="PF03372">
    <property type="entry name" value="Exo_endo_phos"/>
    <property type="match status" value="1"/>
</dbReference>
<dbReference type="SUPFAM" id="SSF56219">
    <property type="entry name" value="DNase I-like"/>
    <property type="match status" value="1"/>
</dbReference>
<feature type="chain" id="PRO_1000137243" description="UPF0294 protein YafD">
    <location>
        <begin position="1"/>
        <end position="266"/>
    </location>
</feature>
<accession>B1LHL8</accession>
<keyword id="KW-0963">Cytoplasm</keyword>
<reference key="1">
    <citation type="journal article" date="2008" name="J. Bacteriol.">
        <title>Insights into the environmental resistance gene pool from the genome sequence of the multidrug-resistant environmental isolate Escherichia coli SMS-3-5.</title>
        <authorList>
            <person name="Fricke W.F."/>
            <person name="Wright M.S."/>
            <person name="Lindell A.H."/>
            <person name="Harkins D.M."/>
            <person name="Baker-Austin C."/>
            <person name="Ravel J."/>
            <person name="Stepanauskas R."/>
        </authorList>
    </citation>
    <scope>NUCLEOTIDE SEQUENCE [LARGE SCALE GENOMIC DNA]</scope>
    <source>
        <strain>SMS-3-5 / SECEC</strain>
    </source>
</reference>
<sequence>MRKNTYAMRYVAGQPAERILPPGSFASIGQALPPGEPLSTEERIRILVWNIYKQQRAEWLSVLKNYGKDAHLVLLQEAQTTPELVQFATANYLAADQVPAFVLPQHPSGVMTLSAAHPVYCCPLREREPILRLAKSALVTVYPLPDTRLLMVVNIHAVNFSLGVDVYSKQLLPIGDQIAHHSGPVIMAGDFNAWSRRRMNALYRFAREMSLRQVRFTDDQRRRAFGRPLDFVFYRGLNVSEASVLVTRASDHNPLLVEFSPGKPDK</sequence>
<protein>
    <recommendedName>
        <fullName evidence="1">UPF0294 protein YafD</fullName>
    </recommendedName>
</protein>
<evidence type="ECO:0000255" key="1">
    <source>
        <dbReference type="HAMAP-Rule" id="MF_01119"/>
    </source>
</evidence>